<reference key="1">
    <citation type="journal article" date="2006" name="J. Bacteriol.">
        <title>Pathogenomic sequence analysis of Bacillus cereus and Bacillus thuringiensis isolates closely related to Bacillus anthracis.</title>
        <authorList>
            <person name="Han C.S."/>
            <person name="Xie G."/>
            <person name="Challacombe J.F."/>
            <person name="Altherr M.R."/>
            <person name="Bhotika S.S."/>
            <person name="Bruce D."/>
            <person name="Campbell C.S."/>
            <person name="Campbell M.L."/>
            <person name="Chen J."/>
            <person name="Chertkov O."/>
            <person name="Cleland C."/>
            <person name="Dimitrijevic M."/>
            <person name="Doggett N.A."/>
            <person name="Fawcett J.J."/>
            <person name="Glavina T."/>
            <person name="Goodwin L.A."/>
            <person name="Hill K.K."/>
            <person name="Hitchcock P."/>
            <person name="Jackson P.J."/>
            <person name="Keim P."/>
            <person name="Kewalramani A.R."/>
            <person name="Longmire J."/>
            <person name="Lucas S."/>
            <person name="Malfatti S."/>
            <person name="McMurry K."/>
            <person name="Meincke L.J."/>
            <person name="Misra M."/>
            <person name="Moseman B.L."/>
            <person name="Mundt M."/>
            <person name="Munk A.C."/>
            <person name="Okinaka R.T."/>
            <person name="Parson-Quintana B."/>
            <person name="Reilly L.P."/>
            <person name="Richardson P."/>
            <person name="Robinson D.L."/>
            <person name="Rubin E."/>
            <person name="Saunders E."/>
            <person name="Tapia R."/>
            <person name="Tesmer J.G."/>
            <person name="Thayer N."/>
            <person name="Thompson L.S."/>
            <person name="Tice H."/>
            <person name="Ticknor L.O."/>
            <person name="Wills P.L."/>
            <person name="Brettin T.S."/>
            <person name="Gilna P."/>
        </authorList>
    </citation>
    <scope>NUCLEOTIDE SEQUENCE [LARGE SCALE GENOMIC DNA]</scope>
    <source>
        <strain>97-27</strain>
    </source>
</reference>
<keyword id="KW-0067">ATP-binding</keyword>
<keyword id="KW-0460">Magnesium</keyword>
<keyword id="KW-0464">Manganese</keyword>
<keyword id="KW-0479">Metal-binding</keyword>
<keyword id="KW-0547">Nucleotide-binding</keyword>
<keyword id="KW-0548">Nucleotidyltransferase</keyword>
<keyword id="KW-0808">Transferase</keyword>
<name>SELO_BACHK</name>
<accession>Q6HFT0</accession>
<feature type="chain" id="PRO_0000271809" description="Protein nucleotidyltransferase YdiU">
    <location>
        <begin position="1"/>
        <end position="488"/>
    </location>
</feature>
<feature type="active site" description="Proton acceptor" evidence="1">
    <location>
        <position position="253"/>
    </location>
</feature>
<feature type="binding site" evidence="1">
    <location>
        <position position="91"/>
    </location>
    <ligand>
        <name>ATP</name>
        <dbReference type="ChEBI" id="CHEBI:30616"/>
    </ligand>
</feature>
<feature type="binding site" evidence="1">
    <location>
        <position position="93"/>
    </location>
    <ligand>
        <name>ATP</name>
        <dbReference type="ChEBI" id="CHEBI:30616"/>
    </ligand>
</feature>
<feature type="binding site" evidence="1">
    <location>
        <position position="94"/>
    </location>
    <ligand>
        <name>ATP</name>
        <dbReference type="ChEBI" id="CHEBI:30616"/>
    </ligand>
</feature>
<feature type="binding site" evidence="1">
    <location>
        <position position="114"/>
    </location>
    <ligand>
        <name>ATP</name>
        <dbReference type="ChEBI" id="CHEBI:30616"/>
    </ligand>
</feature>
<feature type="binding site" evidence="1">
    <location>
        <position position="126"/>
    </location>
    <ligand>
        <name>ATP</name>
        <dbReference type="ChEBI" id="CHEBI:30616"/>
    </ligand>
</feature>
<feature type="binding site" evidence="1">
    <location>
        <position position="127"/>
    </location>
    <ligand>
        <name>ATP</name>
        <dbReference type="ChEBI" id="CHEBI:30616"/>
    </ligand>
</feature>
<feature type="binding site" evidence="1">
    <location>
        <position position="177"/>
    </location>
    <ligand>
        <name>ATP</name>
        <dbReference type="ChEBI" id="CHEBI:30616"/>
    </ligand>
</feature>
<feature type="binding site" evidence="1">
    <location>
        <position position="184"/>
    </location>
    <ligand>
        <name>ATP</name>
        <dbReference type="ChEBI" id="CHEBI:30616"/>
    </ligand>
</feature>
<feature type="binding site" evidence="1">
    <location>
        <position position="254"/>
    </location>
    <ligand>
        <name>Mg(2+)</name>
        <dbReference type="ChEBI" id="CHEBI:18420"/>
    </ligand>
</feature>
<feature type="binding site" evidence="1">
    <location>
        <position position="263"/>
    </location>
    <ligand>
        <name>ATP</name>
        <dbReference type="ChEBI" id="CHEBI:30616"/>
    </ligand>
</feature>
<feature type="binding site" evidence="1">
    <location>
        <position position="263"/>
    </location>
    <ligand>
        <name>Mg(2+)</name>
        <dbReference type="ChEBI" id="CHEBI:18420"/>
    </ligand>
</feature>
<comment type="function">
    <text evidence="1">Nucleotidyltransferase involved in the post-translational modification of proteins. It can catalyze the addition of adenosine monophosphate (AMP) or uridine monophosphate (UMP) to a protein, resulting in modifications known as AMPylation and UMPylation.</text>
</comment>
<comment type="catalytic activity">
    <reaction evidence="1">
        <text>L-seryl-[protein] + ATP = 3-O-(5'-adenylyl)-L-seryl-[protein] + diphosphate</text>
        <dbReference type="Rhea" id="RHEA:58120"/>
        <dbReference type="Rhea" id="RHEA-COMP:9863"/>
        <dbReference type="Rhea" id="RHEA-COMP:15073"/>
        <dbReference type="ChEBI" id="CHEBI:29999"/>
        <dbReference type="ChEBI" id="CHEBI:30616"/>
        <dbReference type="ChEBI" id="CHEBI:33019"/>
        <dbReference type="ChEBI" id="CHEBI:142516"/>
        <dbReference type="EC" id="2.7.7.108"/>
    </reaction>
</comment>
<comment type="catalytic activity">
    <reaction evidence="1">
        <text>L-threonyl-[protein] + ATP = 3-O-(5'-adenylyl)-L-threonyl-[protein] + diphosphate</text>
        <dbReference type="Rhea" id="RHEA:54292"/>
        <dbReference type="Rhea" id="RHEA-COMP:11060"/>
        <dbReference type="Rhea" id="RHEA-COMP:13847"/>
        <dbReference type="ChEBI" id="CHEBI:30013"/>
        <dbReference type="ChEBI" id="CHEBI:30616"/>
        <dbReference type="ChEBI" id="CHEBI:33019"/>
        <dbReference type="ChEBI" id="CHEBI:138113"/>
        <dbReference type="EC" id="2.7.7.108"/>
    </reaction>
</comment>
<comment type="catalytic activity">
    <reaction evidence="1">
        <text>L-tyrosyl-[protein] + ATP = O-(5'-adenylyl)-L-tyrosyl-[protein] + diphosphate</text>
        <dbReference type="Rhea" id="RHEA:54288"/>
        <dbReference type="Rhea" id="RHEA-COMP:10136"/>
        <dbReference type="Rhea" id="RHEA-COMP:13846"/>
        <dbReference type="ChEBI" id="CHEBI:30616"/>
        <dbReference type="ChEBI" id="CHEBI:33019"/>
        <dbReference type="ChEBI" id="CHEBI:46858"/>
        <dbReference type="ChEBI" id="CHEBI:83624"/>
        <dbReference type="EC" id="2.7.7.108"/>
    </reaction>
</comment>
<comment type="catalytic activity">
    <reaction evidence="1">
        <text>L-histidyl-[protein] + UTP = N(tele)-(5'-uridylyl)-L-histidyl-[protein] + diphosphate</text>
        <dbReference type="Rhea" id="RHEA:83891"/>
        <dbReference type="Rhea" id="RHEA-COMP:9745"/>
        <dbReference type="Rhea" id="RHEA-COMP:20239"/>
        <dbReference type="ChEBI" id="CHEBI:29979"/>
        <dbReference type="ChEBI" id="CHEBI:33019"/>
        <dbReference type="ChEBI" id="CHEBI:46398"/>
        <dbReference type="ChEBI" id="CHEBI:233474"/>
    </reaction>
</comment>
<comment type="catalytic activity">
    <reaction evidence="1">
        <text>L-seryl-[protein] + UTP = O-(5'-uridylyl)-L-seryl-[protein] + diphosphate</text>
        <dbReference type="Rhea" id="RHEA:64604"/>
        <dbReference type="Rhea" id="RHEA-COMP:9863"/>
        <dbReference type="Rhea" id="RHEA-COMP:16635"/>
        <dbReference type="ChEBI" id="CHEBI:29999"/>
        <dbReference type="ChEBI" id="CHEBI:33019"/>
        <dbReference type="ChEBI" id="CHEBI:46398"/>
        <dbReference type="ChEBI" id="CHEBI:156051"/>
    </reaction>
</comment>
<comment type="catalytic activity">
    <reaction evidence="1">
        <text>L-tyrosyl-[protein] + UTP = O-(5'-uridylyl)-L-tyrosyl-[protein] + diphosphate</text>
        <dbReference type="Rhea" id="RHEA:83887"/>
        <dbReference type="Rhea" id="RHEA-COMP:10136"/>
        <dbReference type="Rhea" id="RHEA-COMP:20238"/>
        <dbReference type="ChEBI" id="CHEBI:33019"/>
        <dbReference type="ChEBI" id="CHEBI:46398"/>
        <dbReference type="ChEBI" id="CHEBI:46858"/>
        <dbReference type="ChEBI" id="CHEBI:90602"/>
    </reaction>
</comment>
<comment type="cofactor">
    <cofactor evidence="1">
        <name>Mg(2+)</name>
        <dbReference type="ChEBI" id="CHEBI:18420"/>
    </cofactor>
    <cofactor evidence="1">
        <name>Mn(2+)</name>
        <dbReference type="ChEBI" id="CHEBI:29035"/>
    </cofactor>
</comment>
<comment type="similarity">
    <text evidence="1">Belongs to the SELO family.</text>
</comment>
<proteinExistence type="inferred from homology"/>
<organism>
    <name type="scientific">Bacillus thuringiensis subsp. konkukian (strain 97-27)</name>
    <dbReference type="NCBI Taxonomy" id="281309"/>
    <lineage>
        <taxon>Bacteria</taxon>
        <taxon>Bacillati</taxon>
        <taxon>Bacillota</taxon>
        <taxon>Bacilli</taxon>
        <taxon>Bacillales</taxon>
        <taxon>Bacillaceae</taxon>
        <taxon>Bacillus</taxon>
        <taxon>Bacillus cereus group</taxon>
    </lineage>
</organism>
<gene>
    <name evidence="1" type="primary">ydiU</name>
    <name evidence="1" type="synonym">selO</name>
    <name type="ordered locus">BT9727_3274</name>
</gene>
<protein>
    <recommendedName>
        <fullName evidence="1">Protein nucleotidyltransferase YdiU</fullName>
        <ecNumber evidence="1">2.7.7.-</ecNumber>
    </recommendedName>
    <alternativeName>
        <fullName evidence="1">Protein adenylyltransferase YdiU</fullName>
        <ecNumber evidence="1">2.7.7.108</ecNumber>
    </alternativeName>
    <alternativeName>
        <fullName evidence="1">Protein uridylyltransferase YdiU</fullName>
        <ecNumber evidence="1">2.7.7.-</ecNumber>
    </alternativeName>
</protein>
<sequence length="488" mass="55110">MTKNNEAGWNLDHSYTTLPQSFYTEIPPTPVSSPELVKLNHSLAISLGFNPEELKKEAEIAIFAGNALPEGAHPLAQAYAGHQFGHFNMLGDGRALLIGEQITPSGKRFDIQLKGSGPTPYSRRGDGRAALGPMLREYIISEAMYALDIPTTRSLAVVTTGEPTYRETKLPGAILTRVASSHIRVGTFQYAAARGSIEDLQSLADYTIKRHYPEIEAHENRYTALLQEVIKKQASLIAKWQLVGFIHGVMNTDNITISGETIDYGPCAFMDNYDQGTVFSSIDTQGRYAYGNQPYMAAWDLARLAESLIPILHEDEEEALKIAQDEISKFSVQYENNWFLGMKKKLGLFSKEEQDHSLIEQLLKMMEKYKADYTNTFRSLTLNTIENTALFESPEFKEWYKLWQSRLEKQEESKENAYEMMKNNNPSIIPRNHRVEEALEAAVTNGDYSVMEKLLEALANPYAYSTDQEEYCVLPTPTNRPYRTFCGT</sequence>
<evidence type="ECO:0000255" key="1">
    <source>
        <dbReference type="HAMAP-Rule" id="MF_00692"/>
    </source>
</evidence>
<dbReference type="EC" id="2.7.7.-" evidence="1"/>
<dbReference type="EC" id="2.7.7.108" evidence="1"/>
<dbReference type="EMBL" id="AE017355">
    <property type="protein sequence ID" value="AAT61506.1"/>
    <property type="molecule type" value="Genomic_DNA"/>
</dbReference>
<dbReference type="RefSeq" id="WP_000164880.1">
    <property type="nucleotide sequence ID" value="NC_005957.1"/>
</dbReference>
<dbReference type="RefSeq" id="YP_037596.1">
    <property type="nucleotide sequence ID" value="NC_005957.1"/>
</dbReference>
<dbReference type="SMR" id="Q6HFT0"/>
<dbReference type="KEGG" id="btk:BT9727_3274"/>
<dbReference type="PATRIC" id="fig|281309.8.peg.3489"/>
<dbReference type="HOGENOM" id="CLU_010245_4_1_9"/>
<dbReference type="Proteomes" id="UP000001301">
    <property type="component" value="Chromosome"/>
</dbReference>
<dbReference type="GO" id="GO:0070733">
    <property type="term" value="F:AMPylase activity"/>
    <property type="evidence" value="ECO:0007669"/>
    <property type="project" value="RHEA"/>
</dbReference>
<dbReference type="GO" id="GO:0005524">
    <property type="term" value="F:ATP binding"/>
    <property type="evidence" value="ECO:0007669"/>
    <property type="project" value="UniProtKB-UniRule"/>
</dbReference>
<dbReference type="GO" id="GO:0000287">
    <property type="term" value="F:magnesium ion binding"/>
    <property type="evidence" value="ECO:0007669"/>
    <property type="project" value="UniProtKB-UniRule"/>
</dbReference>
<dbReference type="HAMAP" id="MF_00692">
    <property type="entry name" value="YdiU_SelO"/>
    <property type="match status" value="1"/>
</dbReference>
<dbReference type="InterPro" id="IPR003846">
    <property type="entry name" value="SelO"/>
</dbReference>
<dbReference type="NCBIfam" id="NF000658">
    <property type="entry name" value="PRK00029.1"/>
    <property type="match status" value="1"/>
</dbReference>
<dbReference type="PANTHER" id="PTHR32057">
    <property type="entry name" value="PROTEIN ADENYLYLTRANSFERASE SELO, MITOCHONDRIAL"/>
    <property type="match status" value="1"/>
</dbReference>
<dbReference type="PANTHER" id="PTHR32057:SF14">
    <property type="entry name" value="PROTEIN ADENYLYLTRANSFERASE SELO, MITOCHONDRIAL"/>
    <property type="match status" value="1"/>
</dbReference>
<dbReference type="Pfam" id="PF02696">
    <property type="entry name" value="SelO"/>
    <property type="match status" value="1"/>
</dbReference>